<accession>P9WK04</accession>
<accession>L0TAQ1</accession>
<accession>O33238</accession>
<accession>P67085</accession>
<organism>
    <name type="scientific">Mycobacterium tuberculosis (strain CDC 1551 / Oshkosh)</name>
    <dbReference type="NCBI Taxonomy" id="83331"/>
    <lineage>
        <taxon>Bacteria</taxon>
        <taxon>Bacillati</taxon>
        <taxon>Actinomycetota</taxon>
        <taxon>Actinomycetes</taxon>
        <taxon>Mycobacteriales</taxon>
        <taxon>Mycobacteriaceae</taxon>
        <taxon>Mycobacterium</taxon>
        <taxon>Mycobacterium tuberculosis complex</taxon>
    </lineage>
</organism>
<reference key="1">
    <citation type="journal article" date="2002" name="J. Bacteriol.">
        <title>Whole-genome comparison of Mycobacterium tuberculosis clinical and laboratory strains.</title>
        <authorList>
            <person name="Fleischmann R.D."/>
            <person name="Alland D."/>
            <person name="Eisen J.A."/>
            <person name="Carpenter L."/>
            <person name="White O."/>
            <person name="Peterson J.D."/>
            <person name="DeBoy R.T."/>
            <person name="Dodson R.J."/>
            <person name="Gwinn M.L."/>
            <person name="Haft D.H."/>
            <person name="Hickey E.K."/>
            <person name="Kolonay J.F."/>
            <person name="Nelson W.C."/>
            <person name="Umayam L.A."/>
            <person name="Ermolaeva M.D."/>
            <person name="Salzberg S.L."/>
            <person name="Delcher A."/>
            <person name="Utterback T.R."/>
            <person name="Weidman J.F."/>
            <person name="Khouri H.M."/>
            <person name="Gill J."/>
            <person name="Mikula A."/>
            <person name="Bishai W."/>
            <person name="Jacobs W.R. Jr."/>
            <person name="Venter J.C."/>
            <person name="Fraser C.M."/>
        </authorList>
    </citation>
    <scope>NUCLEOTIDE SEQUENCE [LARGE SCALE GENOMIC DNA]</scope>
    <source>
        <strain>CDC 1551 / Oshkosh</strain>
    </source>
</reference>
<keyword id="KW-0004">4Fe-4S</keyword>
<keyword id="KW-0963">Cytoplasm</keyword>
<keyword id="KW-0408">Iron</keyword>
<keyword id="KW-0411">Iron-sulfur</keyword>
<keyword id="KW-0479">Metal-binding</keyword>
<keyword id="KW-1185">Reference proteome</keyword>
<keyword id="KW-0949">S-adenosyl-L-methionine</keyword>
<keyword id="KW-0808">Transferase</keyword>
<keyword id="KW-0819">tRNA processing</keyword>
<evidence type="ECO:0000255" key="1">
    <source>
        <dbReference type="HAMAP-Rule" id="MF_01864"/>
    </source>
</evidence>
<evidence type="ECO:0000255" key="2">
    <source>
        <dbReference type="PROSITE-ProRule" id="PRU01266"/>
    </source>
</evidence>
<evidence type="ECO:0000256" key="3">
    <source>
        <dbReference type="SAM" id="MobiDB-lite"/>
    </source>
</evidence>
<evidence type="ECO:0000305" key="4"/>
<feature type="chain" id="PRO_0000427739" description="tRNA-2-methylthio-N(6)-dimethylallyladenosine synthase">
    <location>
        <begin position="1"/>
        <end position="545"/>
    </location>
</feature>
<feature type="domain" description="MTTase N-terminal" evidence="1">
    <location>
        <begin position="58"/>
        <end position="174"/>
    </location>
</feature>
<feature type="domain" description="Radical SAM core" evidence="2">
    <location>
        <begin position="197"/>
        <end position="433"/>
    </location>
</feature>
<feature type="domain" description="TRAM" evidence="1">
    <location>
        <begin position="436"/>
        <end position="504"/>
    </location>
</feature>
<feature type="region of interest" description="Disordered" evidence="3">
    <location>
        <begin position="1"/>
        <end position="32"/>
    </location>
</feature>
<feature type="binding site" evidence="1">
    <location>
        <position position="67"/>
    </location>
    <ligand>
        <name>[4Fe-4S] cluster</name>
        <dbReference type="ChEBI" id="CHEBI:49883"/>
        <label>1</label>
    </ligand>
</feature>
<feature type="binding site" evidence="1">
    <location>
        <position position="103"/>
    </location>
    <ligand>
        <name>[4Fe-4S] cluster</name>
        <dbReference type="ChEBI" id="CHEBI:49883"/>
        <label>1</label>
    </ligand>
</feature>
<feature type="binding site" evidence="1">
    <location>
        <position position="137"/>
    </location>
    <ligand>
        <name>[4Fe-4S] cluster</name>
        <dbReference type="ChEBI" id="CHEBI:49883"/>
        <label>1</label>
    </ligand>
</feature>
<feature type="binding site" evidence="1">
    <location>
        <position position="211"/>
    </location>
    <ligand>
        <name>[4Fe-4S] cluster</name>
        <dbReference type="ChEBI" id="CHEBI:49883"/>
        <label>2</label>
        <note>4Fe-4S-S-AdoMet</note>
    </ligand>
</feature>
<feature type="binding site" evidence="1">
    <location>
        <position position="215"/>
    </location>
    <ligand>
        <name>[4Fe-4S] cluster</name>
        <dbReference type="ChEBI" id="CHEBI:49883"/>
        <label>2</label>
        <note>4Fe-4S-S-AdoMet</note>
    </ligand>
</feature>
<feature type="binding site" evidence="1">
    <location>
        <position position="218"/>
    </location>
    <ligand>
        <name>[4Fe-4S] cluster</name>
        <dbReference type="ChEBI" id="CHEBI:49883"/>
        <label>2</label>
        <note>4Fe-4S-S-AdoMet</note>
    </ligand>
</feature>
<dbReference type="EC" id="2.8.4.3" evidence="1"/>
<dbReference type="EMBL" id="AE000516">
    <property type="protein sequence ID" value="AAK47122.1"/>
    <property type="status" value="ALT_INIT"/>
    <property type="molecule type" value="Genomic_DNA"/>
</dbReference>
<dbReference type="PIR" id="D70506">
    <property type="entry name" value="D70506"/>
</dbReference>
<dbReference type="RefSeq" id="WP_010924567.1">
    <property type="nucleotide sequence ID" value="NC_002755.2"/>
</dbReference>
<dbReference type="SMR" id="P9WK04"/>
<dbReference type="KEGG" id="mtc:MT2803"/>
<dbReference type="HOGENOM" id="CLU_018697_2_2_11"/>
<dbReference type="Proteomes" id="UP000001020">
    <property type="component" value="Chromosome"/>
</dbReference>
<dbReference type="GO" id="GO:0005829">
    <property type="term" value="C:cytosol"/>
    <property type="evidence" value="ECO:0007669"/>
    <property type="project" value="TreeGrafter"/>
</dbReference>
<dbReference type="GO" id="GO:0051539">
    <property type="term" value="F:4 iron, 4 sulfur cluster binding"/>
    <property type="evidence" value="ECO:0007669"/>
    <property type="project" value="UniProtKB-UniRule"/>
</dbReference>
<dbReference type="GO" id="GO:0046872">
    <property type="term" value="F:metal ion binding"/>
    <property type="evidence" value="ECO:0007669"/>
    <property type="project" value="UniProtKB-KW"/>
</dbReference>
<dbReference type="GO" id="GO:0035597">
    <property type="term" value="F:N6-isopentenyladenosine methylthiotransferase activity"/>
    <property type="evidence" value="ECO:0007669"/>
    <property type="project" value="TreeGrafter"/>
</dbReference>
<dbReference type="CDD" id="cd01335">
    <property type="entry name" value="Radical_SAM"/>
    <property type="match status" value="1"/>
</dbReference>
<dbReference type="FunFam" id="3.40.50.12160:FF:000008">
    <property type="entry name" value="tRNA-2-methylthio-N(6)-dimethylallyladenosine synthase"/>
    <property type="match status" value="1"/>
</dbReference>
<dbReference type="FunFam" id="3.80.30.20:FF:000001">
    <property type="entry name" value="tRNA-2-methylthio-N(6)-dimethylallyladenosine synthase 2"/>
    <property type="match status" value="1"/>
</dbReference>
<dbReference type="Gene3D" id="3.40.50.12160">
    <property type="entry name" value="Methylthiotransferase, N-terminal domain"/>
    <property type="match status" value="1"/>
</dbReference>
<dbReference type="Gene3D" id="3.80.30.20">
    <property type="entry name" value="tm_1862 like domain"/>
    <property type="match status" value="1"/>
</dbReference>
<dbReference type="HAMAP" id="MF_01864">
    <property type="entry name" value="tRNA_metthiotr_MiaB"/>
    <property type="match status" value="1"/>
</dbReference>
<dbReference type="InterPro" id="IPR006638">
    <property type="entry name" value="Elp3/MiaA/NifB-like_rSAM"/>
</dbReference>
<dbReference type="InterPro" id="IPR005839">
    <property type="entry name" value="Methylthiotransferase"/>
</dbReference>
<dbReference type="InterPro" id="IPR020612">
    <property type="entry name" value="Methylthiotransferase_CS"/>
</dbReference>
<dbReference type="InterPro" id="IPR013848">
    <property type="entry name" value="Methylthiotransferase_N"/>
</dbReference>
<dbReference type="InterPro" id="IPR038135">
    <property type="entry name" value="Methylthiotransferase_N_sf"/>
</dbReference>
<dbReference type="InterPro" id="IPR006463">
    <property type="entry name" value="MiaB_methiolase"/>
</dbReference>
<dbReference type="InterPro" id="IPR007197">
    <property type="entry name" value="rSAM"/>
</dbReference>
<dbReference type="InterPro" id="IPR023404">
    <property type="entry name" value="rSAM_horseshoe"/>
</dbReference>
<dbReference type="InterPro" id="IPR002792">
    <property type="entry name" value="TRAM_dom"/>
</dbReference>
<dbReference type="NCBIfam" id="TIGR01574">
    <property type="entry name" value="miaB-methiolase"/>
    <property type="match status" value="1"/>
</dbReference>
<dbReference type="NCBIfam" id="TIGR00089">
    <property type="entry name" value="MiaB/RimO family radical SAM methylthiotransferase"/>
    <property type="match status" value="1"/>
</dbReference>
<dbReference type="PANTHER" id="PTHR43020">
    <property type="entry name" value="CDK5 REGULATORY SUBUNIT-ASSOCIATED PROTEIN 1"/>
    <property type="match status" value="1"/>
</dbReference>
<dbReference type="PANTHER" id="PTHR43020:SF2">
    <property type="entry name" value="MITOCHONDRIAL TRNA METHYLTHIOTRANSFERASE CDK5RAP1"/>
    <property type="match status" value="1"/>
</dbReference>
<dbReference type="Pfam" id="PF04055">
    <property type="entry name" value="Radical_SAM"/>
    <property type="match status" value="1"/>
</dbReference>
<dbReference type="Pfam" id="PF00919">
    <property type="entry name" value="UPF0004"/>
    <property type="match status" value="1"/>
</dbReference>
<dbReference type="SFLD" id="SFLDF00273">
    <property type="entry name" value="(dimethylallyl)adenosine_tRNA"/>
    <property type="match status" value="1"/>
</dbReference>
<dbReference type="SFLD" id="SFLDG01082">
    <property type="entry name" value="B12-binding_domain_containing"/>
    <property type="match status" value="1"/>
</dbReference>
<dbReference type="SFLD" id="SFLDG01061">
    <property type="entry name" value="methylthiotransferase"/>
    <property type="match status" value="1"/>
</dbReference>
<dbReference type="SMART" id="SM00729">
    <property type="entry name" value="Elp3"/>
    <property type="match status" value="1"/>
</dbReference>
<dbReference type="SUPFAM" id="SSF102114">
    <property type="entry name" value="Radical SAM enzymes"/>
    <property type="match status" value="1"/>
</dbReference>
<dbReference type="PROSITE" id="PS51449">
    <property type="entry name" value="MTTASE_N"/>
    <property type="match status" value="1"/>
</dbReference>
<dbReference type="PROSITE" id="PS01278">
    <property type="entry name" value="MTTASE_RADICAL"/>
    <property type="match status" value="1"/>
</dbReference>
<dbReference type="PROSITE" id="PS51918">
    <property type="entry name" value="RADICAL_SAM"/>
    <property type="match status" value="1"/>
</dbReference>
<dbReference type="PROSITE" id="PS50926">
    <property type="entry name" value="TRAM"/>
    <property type="match status" value="1"/>
</dbReference>
<comment type="function">
    <text evidence="1">Catalyzes the methylthiolation of N6-(dimethylallyl)adenosine (i(6)A), leading to the formation of 2-methylthio-N6-(dimethylallyl)adenosine (ms(2)i(6)A) at position 37 in tRNAs that read codons beginning with uridine.</text>
</comment>
<comment type="catalytic activity">
    <reaction evidence="1">
        <text>N(6)-dimethylallyladenosine(37) in tRNA + (sulfur carrier)-SH + AH2 + 2 S-adenosyl-L-methionine = 2-methylsulfanyl-N(6)-dimethylallyladenosine(37) in tRNA + (sulfur carrier)-H + 5'-deoxyadenosine + L-methionine + A + S-adenosyl-L-homocysteine + 2 H(+)</text>
        <dbReference type="Rhea" id="RHEA:37067"/>
        <dbReference type="Rhea" id="RHEA-COMP:10375"/>
        <dbReference type="Rhea" id="RHEA-COMP:10376"/>
        <dbReference type="Rhea" id="RHEA-COMP:14737"/>
        <dbReference type="Rhea" id="RHEA-COMP:14739"/>
        <dbReference type="ChEBI" id="CHEBI:13193"/>
        <dbReference type="ChEBI" id="CHEBI:15378"/>
        <dbReference type="ChEBI" id="CHEBI:17319"/>
        <dbReference type="ChEBI" id="CHEBI:17499"/>
        <dbReference type="ChEBI" id="CHEBI:29917"/>
        <dbReference type="ChEBI" id="CHEBI:57844"/>
        <dbReference type="ChEBI" id="CHEBI:57856"/>
        <dbReference type="ChEBI" id="CHEBI:59789"/>
        <dbReference type="ChEBI" id="CHEBI:64428"/>
        <dbReference type="ChEBI" id="CHEBI:74415"/>
        <dbReference type="ChEBI" id="CHEBI:74417"/>
        <dbReference type="EC" id="2.8.4.3"/>
    </reaction>
</comment>
<comment type="cofactor">
    <cofactor evidence="1">
        <name>[4Fe-4S] cluster</name>
        <dbReference type="ChEBI" id="CHEBI:49883"/>
    </cofactor>
    <text evidence="1">Binds 2 [4Fe-4S] clusters. One cluster is coordinated with 3 cysteines and an exchangeable S-adenosyl-L-methionine.</text>
</comment>
<comment type="subunit">
    <text evidence="1">Monomer.</text>
</comment>
<comment type="subcellular location">
    <subcellularLocation>
        <location evidence="1">Cytoplasm</location>
    </subcellularLocation>
</comment>
<comment type="similarity">
    <text evidence="1">Belongs to the methylthiotransferase family. MiaB subfamily.</text>
</comment>
<comment type="sequence caution" evidence="4">
    <conflict type="erroneous initiation">
        <sequence resource="EMBL-CDS" id="AAK47122"/>
    </conflict>
    <text>Truncated N-terminus.</text>
</comment>
<gene>
    <name evidence="1" type="primary">miaB</name>
    <name type="ordered locus">MT2803</name>
</gene>
<protein>
    <recommendedName>
        <fullName evidence="1">tRNA-2-methylthio-N(6)-dimethylallyladenosine synthase</fullName>
        <ecNumber evidence="1">2.8.4.3</ecNumber>
    </recommendedName>
    <alternativeName>
        <fullName evidence="1">(Dimethylallyl)adenosine tRNA methylthiotransferase MiaB</fullName>
    </alternativeName>
    <alternativeName>
        <fullName evidence="1">tRNA-i(6)A37 methylthiotransferase</fullName>
    </alternativeName>
</protein>
<proteinExistence type="inferred from homology"/>
<sequence length="545" mass="58381">MSSASPLARCCDEATPSAGPRAAQPPYHGPVTSMVAHDAAAGVTGEGAGPPVRRAPARTYQVRTYGCQMNVHDSERLAGLLEAAGYRRATDGSEADVVVFNTCAVRENADNRLYGNLSHLAPRKRANPDMQIAVGGCLAQKDRDAVLRRAPWVDVVFGTHNIGSLPTLLERARHNKVAQVEIAEALQQFPSSLPSSRESAYAAWVSISVGCNNSCTFCIVPSLRGREVDRSPADILAEVRSLVNDGVLEVTLLGQNVNAYGVSFADPALPRNRGAFAELLRACGDIDGLERVRFTSPHPAEFTDDVIEAMAQTRNVCPALHMPLQSGSDRILRAMRRSYRAERYLGIIERVRAAIPHAAITTDLIVGFPGETEEDFAATLDVVRRARFAAAFTFQYSKRPGTPAAQLDGQLPKAVVQERYERLIALQEQISLEANRALVGQAVEVLVATGEGRKDTVTARMSGRARDGRLVHFTAGQPRVRPGDVITTKVTEAAPHHLIADAGVLTHRRTRAGDAHTAGQPGRAVGLGMPGVGLPVSAAKPGGCR</sequence>
<name>MIAB_MYCTO</name>